<name>DEOC_YERPY</name>
<protein>
    <recommendedName>
        <fullName evidence="1">Deoxyribose-phosphate aldolase</fullName>
        <shortName evidence="1">DERA</shortName>
        <ecNumber evidence="1">4.1.2.4</ecNumber>
    </recommendedName>
    <alternativeName>
        <fullName evidence="1">2-deoxy-D-ribose 5-phosphate aldolase</fullName>
    </alternativeName>
    <alternativeName>
        <fullName evidence="1">Phosphodeoxyriboaldolase</fullName>
        <shortName evidence="1">Deoxyriboaldolase</shortName>
    </alternativeName>
</protein>
<feature type="chain" id="PRO_1000094869" description="Deoxyribose-phosphate aldolase">
    <location>
        <begin position="1"/>
        <end position="223"/>
    </location>
</feature>
<feature type="active site" description="Proton donor/acceptor" evidence="1">
    <location>
        <position position="91"/>
    </location>
</feature>
<feature type="active site" description="Schiff-base intermediate with acetaldehyde" evidence="1">
    <location>
        <position position="153"/>
    </location>
</feature>
<feature type="active site" description="Proton donor/acceptor" evidence="1">
    <location>
        <position position="182"/>
    </location>
</feature>
<organism>
    <name type="scientific">Yersinia pseudotuberculosis serotype O:3 (strain YPIII)</name>
    <dbReference type="NCBI Taxonomy" id="502800"/>
    <lineage>
        <taxon>Bacteria</taxon>
        <taxon>Pseudomonadati</taxon>
        <taxon>Pseudomonadota</taxon>
        <taxon>Gammaproteobacteria</taxon>
        <taxon>Enterobacterales</taxon>
        <taxon>Yersiniaceae</taxon>
        <taxon>Yersinia</taxon>
    </lineage>
</organism>
<sequence length="223" mass="23266">MTTNYAHYIDHTLLAMDATEAQIIKLCEEAKQHHFYAVCVNSGYVPVAAQQLAGSSVKVCSVIGFPLGAGLTAAKAFEAQAAINAGAQEIDMVINVGWLKSGKIADVKADIKAVRDNCAATPLKVILETCLLSDEQIVQVCEMCRELDVAFVKTSTGFSTGGAKEEHVKLMRATVGPVMGVKASGAVRDRATAETMIQAGATRIGTSSGVAIVSGQQAAASGY</sequence>
<dbReference type="EC" id="4.1.2.4" evidence="1"/>
<dbReference type="EMBL" id="CP000950">
    <property type="protein sequence ID" value="ACA69014.1"/>
    <property type="molecule type" value="Genomic_DNA"/>
</dbReference>
<dbReference type="RefSeq" id="WP_002208769.1">
    <property type="nucleotide sequence ID" value="NZ_CP009792.1"/>
</dbReference>
<dbReference type="SMR" id="B1JRK6"/>
<dbReference type="GeneID" id="57977455"/>
<dbReference type="KEGG" id="ypy:YPK_2737"/>
<dbReference type="PATRIC" id="fig|502800.11.peg.3441"/>
<dbReference type="UniPathway" id="UPA00002">
    <property type="reaction ID" value="UER00468"/>
</dbReference>
<dbReference type="GO" id="GO:0005737">
    <property type="term" value="C:cytoplasm"/>
    <property type="evidence" value="ECO:0007669"/>
    <property type="project" value="UniProtKB-SubCell"/>
</dbReference>
<dbReference type="GO" id="GO:0004139">
    <property type="term" value="F:deoxyribose-phosphate aldolase activity"/>
    <property type="evidence" value="ECO:0007669"/>
    <property type="project" value="UniProtKB-UniRule"/>
</dbReference>
<dbReference type="GO" id="GO:0006018">
    <property type="term" value="P:2-deoxyribose 1-phosphate catabolic process"/>
    <property type="evidence" value="ECO:0007669"/>
    <property type="project" value="UniProtKB-UniRule"/>
</dbReference>
<dbReference type="GO" id="GO:0016052">
    <property type="term" value="P:carbohydrate catabolic process"/>
    <property type="evidence" value="ECO:0007669"/>
    <property type="project" value="TreeGrafter"/>
</dbReference>
<dbReference type="GO" id="GO:0009264">
    <property type="term" value="P:deoxyribonucleotide catabolic process"/>
    <property type="evidence" value="ECO:0007669"/>
    <property type="project" value="InterPro"/>
</dbReference>
<dbReference type="CDD" id="cd00959">
    <property type="entry name" value="DeoC"/>
    <property type="match status" value="1"/>
</dbReference>
<dbReference type="FunFam" id="3.20.20.70:FF:000044">
    <property type="entry name" value="Deoxyribose-phosphate aldolase"/>
    <property type="match status" value="1"/>
</dbReference>
<dbReference type="Gene3D" id="3.20.20.70">
    <property type="entry name" value="Aldolase class I"/>
    <property type="match status" value="1"/>
</dbReference>
<dbReference type="HAMAP" id="MF_00114">
    <property type="entry name" value="DeoC_type1"/>
    <property type="match status" value="1"/>
</dbReference>
<dbReference type="InterPro" id="IPR013785">
    <property type="entry name" value="Aldolase_TIM"/>
</dbReference>
<dbReference type="InterPro" id="IPR011343">
    <property type="entry name" value="DeoC"/>
</dbReference>
<dbReference type="InterPro" id="IPR002915">
    <property type="entry name" value="DeoC/FbaB/LacD_aldolase"/>
</dbReference>
<dbReference type="InterPro" id="IPR028581">
    <property type="entry name" value="DeoC_typeI"/>
</dbReference>
<dbReference type="NCBIfam" id="TIGR00126">
    <property type="entry name" value="deoC"/>
    <property type="match status" value="1"/>
</dbReference>
<dbReference type="PANTHER" id="PTHR10889">
    <property type="entry name" value="DEOXYRIBOSE-PHOSPHATE ALDOLASE"/>
    <property type="match status" value="1"/>
</dbReference>
<dbReference type="PANTHER" id="PTHR10889:SF1">
    <property type="entry name" value="DEOXYRIBOSE-PHOSPHATE ALDOLASE"/>
    <property type="match status" value="1"/>
</dbReference>
<dbReference type="Pfam" id="PF01791">
    <property type="entry name" value="DeoC"/>
    <property type="match status" value="1"/>
</dbReference>
<dbReference type="PIRSF" id="PIRSF001357">
    <property type="entry name" value="DeoC"/>
    <property type="match status" value="1"/>
</dbReference>
<dbReference type="SMART" id="SM01133">
    <property type="entry name" value="DeoC"/>
    <property type="match status" value="1"/>
</dbReference>
<dbReference type="SUPFAM" id="SSF51569">
    <property type="entry name" value="Aldolase"/>
    <property type="match status" value="1"/>
</dbReference>
<evidence type="ECO:0000255" key="1">
    <source>
        <dbReference type="HAMAP-Rule" id="MF_00114"/>
    </source>
</evidence>
<comment type="function">
    <text evidence="1">Catalyzes a reversible aldol reaction between acetaldehyde and D-glyceraldehyde 3-phosphate to generate 2-deoxy-D-ribose 5-phosphate.</text>
</comment>
<comment type="catalytic activity">
    <reaction evidence="1">
        <text>2-deoxy-D-ribose 5-phosphate = D-glyceraldehyde 3-phosphate + acetaldehyde</text>
        <dbReference type="Rhea" id="RHEA:12821"/>
        <dbReference type="ChEBI" id="CHEBI:15343"/>
        <dbReference type="ChEBI" id="CHEBI:59776"/>
        <dbReference type="ChEBI" id="CHEBI:62877"/>
        <dbReference type="EC" id="4.1.2.4"/>
    </reaction>
</comment>
<comment type="pathway">
    <text evidence="1">Carbohydrate degradation; 2-deoxy-D-ribose 1-phosphate degradation; D-glyceraldehyde 3-phosphate and acetaldehyde from 2-deoxy-alpha-D-ribose 1-phosphate: step 2/2.</text>
</comment>
<comment type="subcellular location">
    <subcellularLocation>
        <location evidence="1">Cytoplasm</location>
    </subcellularLocation>
</comment>
<comment type="similarity">
    <text evidence="1">Belongs to the DeoC/FbaB aldolase family. DeoC type 1 subfamily.</text>
</comment>
<proteinExistence type="inferred from homology"/>
<reference key="1">
    <citation type="submission" date="2008-02" db="EMBL/GenBank/DDBJ databases">
        <title>Complete sequence of Yersinia pseudotuberculosis YPIII.</title>
        <authorList>
            <consortium name="US DOE Joint Genome Institute"/>
            <person name="Copeland A."/>
            <person name="Lucas S."/>
            <person name="Lapidus A."/>
            <person name="Glavina del Rio T."/>
            <person name="Dalin E."/>
            <person name="Tice H."/>
            <person name="Bruce D."/>
            <person name="Goodwin L."/>
            <person name="Pitluck S."/>
            <person name="Munk A.C."/>
            <person name="Brettin T."/>
            <person name="Detter J.C."/>
            <person name="Han C."/>
            <person name="Tapia R."/>
            <person name="Schmutz J."/>
            <person name="Larimer F."/>
            <person name="Land M."/>
            <person name="Hauser L."/>
            <person name="Challacombe J.F."/>
            <person name="Green L."/>
            <person name="Lindler L.E."/>
            <person name="Nikolich M.P."/>
            <person name="Richardson P."/>
        </authorList>
    </citation>
    <scope>NUCLEOTIDE SEQUENCE [LARGE SCALE GENOMIC DNA]</scope>
    <source>
        <strain>YPIII</strain>
    </source>
</reference>
<gene>
    <name evidence="1" type="primary">deoC</name>
    <name type="ordered locus">YPK_2737</name>
</gene>
<accession>B1JRK6</accession>
<keyword id="KW-0963">Cytoplasm</keyword>
<keyword id="KW-0456">Lyase</keyword>
<keyword id="KW-0704">Schiff base</keyword>